<name>RL32_RICCK</name>
<proteinExistence type="inferred from homology"/>
<gene>
    <name evidence="1" type="primary">rpmF</name>
    <name type="ordered locus">A1E_04955</name>
</gene>
<dbReference type="EMBL" id="CP000409">
    <property type="protein sequence ID" value="ABV73907.1"/>
    <property type="molecule type" value="Genomic_DNA"/>
</dbReference>
<dbReference type="RefSeq" id="WP_012149102.1">
    <property type="nucleotide sequence ID" value="NC_009879.1"/>
</dbReference>
<dbReference type="SMR" id="A8EZX4"/>
<dbReference type="STRING" id="293613.A1E_04955"/>
<dbReference type="KEGG" id="rcm:A1E_04955"/>
<dbReference type="eggNOG" id="COG0333">
    <property type="taxonomic scope" value="Bacteria"/>
</dbReference>
<dbReference type="HOGENOM" id="CLU_129084_2_0_5"/>
<dbReference type="Proteomes" id="UP000007056">
    <property type="component" value="Chromosome"/>
</dbReference>
<dbReference type="GO" id="GO:0015934">
    <property type="term" value="C:large ribosomal subunit"/>
    <property type="evidence" value="ECO:0007669"/>
    <property type="project" value="InterPro"/>
</dbReference>
<dbReference type="GO" id="GO:0003735">
    <property type="term" value="F:structural constituent of ribosome"/>
    <property type="evidence" value="ECO:0007669"/>
    <property type="project" value="InterPro"/>
</dbReference>
<dbReference type="GO" id="GO:0006412">
    <property type="term" value="P:translation"/>
    <property type="evidence" value="ECO:0007669"/>
    <property type="project" value="UniProtKB-UniRule"/>
</dbReference>
<dbReference type="FunFam" id="1.20.5.640:FF:000001">
    <property type="entry name" value="50S ribosomal protein L32"/>
    <property type="match status" value="1"/>
</dbReference>
<dbReference type="Gene3D" id="1.20.5.640">
    <property type="entry name" value="Single helix bin"/>
    <property type="match status" value="1"/>
</dbReference>
<dbReference type="HAMAP" id="MF_00340">
    <property type="entry name" value="Ribosomal_bL32"/>
    <property type="match status" value="1"/>
</dbReference>
<dbReference type="InterPro" id="IPR002677">
    <property type="entry name" value="Ribosomal_bL32"/>
</dbReference>
<dbReference type="InterPro" id="IPR044957">
    <property type="entry name" value="Ribosomal_bL32_bact"/>
</dbReference>
<dbReference type="InterPro" id="IPR011332">
    <property type="entry name" value="Ribosomal_zn-bd"/>
</dbReference>
<dbReference type="NCBIfam" id="TIGR01031">
    <property type="entry name" value="rpmF_bact"/>
    <property type="match status" value="1"/>
</dbReference>
<dbReference type="PANTHER" id="PTHR35534">
    <property type="entry name" value="50S RIBOSOMAL PROTEIN L32"/>
    <property type="match status" value="1"/>
</dbReference>
<dbReference type="PANTHER" id="PTHR35534:SF1">
    <property type="entry name" value="LARGE RIBOSOMAL SUBUNIT PROTEIN BL32"/>
    <property type="match status" value="1"/>
</dbReference>
<dbReference type="Pfam" id="PF01783">
    <property type="entry name" value="Ribosomal_L32p"/>
    <property type="match status" value="1"/>
</dbReference>
<dbReference type="SUPFAM" id="SSF57829">
    <property type="entry name" value="Zn-binding ribosomal proteins"/>
    <property type="match status" value="1"/>
</dbReference>
<protein>
    <recommendedName>
        <fullName evidence="1">Large ribosomal subunit protein bL32</fullName>
    </recommendedName>
    <alternativeName>
        <fullName evidence="2">50S ribosomal protein L32</fullName>
    </alternativeName>
</protein>
<keyword id="KW-0687">Ribonucleoprotein</keyword>
<keyword id="KW-0689">Ribosomal protein</keyword>
<evidence type="ECO:0000255" key="1">
    <source>
        <dbReference type="HAMAP-Rule" id="MF_00340"/>
    </source>
</evidence>
<evidence type="ECO:0000305" key="2"/>
<comment type="similarity">
    <text evidence="1">Belongs to the bacterial ribosomal protein bL32 family.</text>
</comment>
<reference key="1">
    <citation type="submission" date="2007-09" db="EMBL/GenBank/DDBJ databases">
        <title>Complete genome sequence of Rickettsia canadensis.</title>
        <authorList>
            <person name="Madan A."/>
            <person name="Fahey J."/>
            <person name="Helton E."/>
            <person name="Ketteman M."/>
            <person name="Madan A."/>
            <person name="Rodrigues S."/>
            <person name="Sanchez A."/>
            <person name="Whiting M."/>
            <person name="Dasch G."/>
            <person name="Eremeeva M."/>
        </authorList>
    </citation>
    <scope>NUCLEOTIDE SEQUENCE [LARGE SCALE GENOMIC DNA]</scope>
    <source>
        <strain>McKiel</strain>
    </source>
</reference>
<organism>
    <name type="scientific">Rickettsia canadensis (strain McKiel)</name>
    <dbReference type="NCBI Taxonomy" id="293613"/>
    <lineage>
        <taxon>Bacteria</taxon>
        <taxon>Pseudomonadati</taxon>
        <taxon>Pseudomonadota</taxon>
        <taxon>Alphaproteobacteria</taxon>
        <taxon>Rickettsiales</taxon>
        <taxon>Rickettsiaceae</taxon>
        <taxon>Rickettsieae</taxon>
        <taxon>Rickettsia</taxon>
        <taxon>belli group</taxon>
    </lineage>
</organism>
<sequence length="66" mass="7418">MAVPKKKTSKSKRNMRRSHLALGKVNVIVDSQTGEYKLPHHVSLVDGTYNNRQVVTKKIETAEEVA</sequence>
<accession>A8EZX4</accession>
<feature type="chain" id="PRO_1000005075" description="Large ribosomal subunit protein bL32">
    <location>
        <begin position="1"/>
        <end position="66"/>
    </location>
</feature>